<protein>
    <recommendedName>
        <fullName evidence="1">Large ribosomal subunit protein uL11</fullName>
    </recommendedName>
    <alternativeName>
        <fullName evidence="2">50S ribosomal protein L11</fullName>
    </alternativeName>
</protein>
<accession>Q8R7U2</accession>
<dbReference type="EMBL" id="AE008691">
    <property type="protein sequence ID" value="AAM25447.1"/>
    <property type="molecule type" value="Genomic_DNA"/>
</dbReference>
<dbReference type="RefSeq" id="WP_011026350.1">
    <property type="nucleotide sequence ID" value="NZ_JANUCV010000001.1"/>
</dbReference>
<dbReference type="SMR" id="Q8R7U2"/>
<dbReference type="STRING" id="273068.TTE2306"/>
<dbReference type="KEGG" id="tte:TTE2306"/>
<dbReference type="eggNOG" id="COG0080">
    <property type="taxonomic scope" value="Bacteria"/>
</dbReference>
<dbReference type="HOGENOM" id="CLU_074237_2_1_9"/>
<dbReference type="OrthoDB" id="9802408at2"/>
<dbReference type="Proteomes" id="UP000000555">
    <property type="component" value="Chromosome"/>
</dbReference>
<dbReference type="GO" id="GO:0022625">
    <property type="term" value="C:cytosolic large ribosomal subunit"/>
    <property type="evidence" value="ECO:0007669"/>
    <property type="project" value="TreeGrafter"/>
</dbReference>
<dbReference type="GO" id="GO:0070180">
    <property type="term" value="F:large ribosomal subunit rRNA binding"/>
    <property type="evidence" value="ECO:0007669"/>
    <property type="project" value="UniProtKB-UniRule"/>
</dbReference>
<dbReference type="GO" id="GO:0003735">
    <property type="term" value="F:structural constituent of ribosome"/>
    <property type="evidence" value="ECO:0007669"/>
    <property type="project" value="InterPro"/>
</dbReference>
<dbReference type="GO" id="GO:0006412">
    <property type="term" value="P:translation"/>
    <property type="evidence" value="ECO:0007669"/>
    <property type="project" value="UniProtKB-UniRule"/>
</dbReference>
<dbReference type="CDD" id="cd00349">
    <property type="entry name" value="Ribosomal_L11"/>
    <property type="match status" value="1"/>
</dbReference>
<dbReference type="FunFam" id="1.10.10.250:FF:000001">
    <property type="entry name" value="50S ribosomal protein L11"/>
    <property type="match status" value="1"/>
</dbReference>
<dbReference type="FunFam" id="3.30.1550.10:FF:000001">
    <property type="entry name" value="50S ribosomal protein L11"/>
    <property type="match status" value="1"/>
</dbReference>
<dbReference type="Gene3D" id="1.10.10.250">
    <property type="entry name" value="Ribosomal protein L11, C-terminal domain"/>
    <property type="match status" value="1"/>
</dbReference>
<dbReference type="Gene3D" id="3.30.1550.10">
    <property type="entry name" value="Ribosomal protein L11/L12, N-terminal domain"/>
    <property type="match status" value="1"/>
</dbReference>
<dbReference type="HAMAP" id="MF_00736">
    <property type="entry name" value="Ribosomal_uL11"/>
    <property type="match status" value="1"/>
</dbReference>
<dbReference type="InterPro" id="IPR000911">
    <property type="entry name" value="Ribosomal_uL11"/>
</dbReference>
<dbReference type="InterPro" id="IPR006519">
    <property type="entry name" value="Ribosomal_uL11_bac-typ"/>
</dbReference>
<dbReference type="InterPro" id="IPR020783">
    <property type="entry name" value="Ribosomal_uL11_C"/>
</dbReference>
<dbReference type="InterPro" id="IPR036769">
    <property type="entry name" value="Ribosomal_uL11_C_sf"/>
</dbReference>
<dbReference type="InterPro" id="IPR020784">
    <property type="entry name" value="Ribosomal_uL11_N"/>
</dbReference>
<dbReference type="InterPro" id="IPR036796">
    <property type="entry name" value="Ribosomal_uL11_N_sf"/>
</dbReference>
<dbReference type="NCBIfam" id="TIGR01632">
    <property type="entry name" value="L11_bact"/>
    <property type="match status" value="1"/>
</dbReference>
<dbReference type="PANTHER" id="PTHR11661">
    <property type="entry name" value="60S RIBOSOMAL PROTEIN L12"/>
    <property type="match status" value="1"/>
</dbReference>
<dbReference type="PANTHER" id="PTHR11661:SF1">
    <property type="entry name" value="LARGE RIBOSOMAL SUBUNIT PROTEIN UL11M"/>
    <property type="match status" value="1"/>
</dbReference>
<dbReference type="Pfam" id="PF00298">
    <property type="entry name" value="Ribosomal_L11"/>
    <property type="match status" value="1"/>
</dbReference>
<dbReference type="Pfam" id="PF03946">
    <property type="entry name" value="Ribosomal_L11_N"/>
    <property type="match status" value="1"/>
</dbReference>
<dbReference type="SMART" id="SM00649">
    <property type="entry name" value="RL11"/>
    <property type="match status" value="1"/>
</dbReference>
<dbReference type="SUPFAM" id="SSF54747">
    <property type="entry name" value="Ribosomal L11/L12e N-terminal domain"/>
    <property type="match status" value="1"/>
</dbReference>
<dbReference type="SUPFAM" id="SSF46906">
    <property type="entry name" value="Ribosomal protein L11, C-terminal domain"/>
    <property type="match status" value="1"/>
</dbReference>
<name>RL11_CALS4</name>
<sequence>MAKKVVAVVKIQLPAGKATPAPPVGTALGPHGVNIMAFCKEFNERTAKDAGLIIPVVITIYSDRSFSFITKTPPASVLLKKAAGIESGSPQPNKQKVGKITKQQLREIAEIKMRDLNTTDIEAAMRMIAGTARSMGIEIV</sequence>
<reference key="1">
    <citation type="journal article" date="2002" name="Genome Res.">
        <title>A complete sequence of the T. tengcongensis genome.</title>
        <authorList>
            <person name="Bao Q."/>
            <person name="Tian Y."/>
            <person name="Li W."/>
            <person name="Xu Z."/>
            <person name="Xuan Z."/>
            <person name="Hu S."/>
            <person name="Dong W."/>
            <person name="Yang J."/>
            <person name="Chen Y."/>
            <person name="Xue Y."/>
            <person name="Xu Y."/>
            <person name="Lai X."/>
            <person name="Huang L."/>
            <person name="Dong X."/>
            <person name="Ma Y."/>
            <person name="Ling L."/>
            <person name="Tan H."/>
            <person name="Chen R."/>
            <person name="Wang J."/>
            <person name="Yu J."/>
            <person name="Yang H."/>
        </authorList>
    </citation>
    <scope>NUCLEOTIDE SEQUENCE [LARGE SCALE GENOMIC DNA]</scope>
    <source>
        <strain>DSM 15242 / JCM 11007 / NBRC 100824 / MB4</strain>
    </source>
</reference>
<proteinExistence type="inferred from homology"/>
<keyword id="KW-0488">Methylation</keyword>
<keyword id="KW-1185">Reference proteome</keyword>
<keyword id="KW-0687">Ribonucleoprotein</keyword>
<keyword id="KW-0689">Ribosomal protein</keyword>
<keyword id="KW-0694">RNA-binding</keyword>
<keyword id="KW-0699">rRNA-binding</keyword>
<evidence type="ECO:0000255" key="1">
    <source>
        <dbReference type="HAMAP-Rule" id="MF_00736"/>
    </source>
</evidence>
<evidence type="ECO:0000305" key="2"/>
<comment type="function">
    <text evidence="1">Forms part of the ribosomal stalk which helps the ribosome interact with GTP-bound translation factors.</text>
</comment>
<comment type="subunit">
    <text evidence="1">Part of the ribosomal stalk of the 50S ribosomal subunit. Interacts with L10 and the large rRNA to form the base of the stalk. L10 forms an elongated spine to which L12 dimers bind in a sequential fashion forming a multimeric L10(L12)X complex.</text>
</comment>
<comment type="PTM">
    <text evidence="1">One or more lysine residues are methylated.</text>
</comment>
<comment type="similarity">
    <text evidence="1">Belongs to the universal ribosomal protein uL11 family.</text>
</comment>
<gene>
    <name evidence="1" type="primary">rplK</name>
    <name type="ordered locus">TTE2306</name>
</gene>
<feature type="chain" id="PRO_0000104401" description="Large ribosomal subunit protein uL11">
    <location>
        <begin position="1"/>
        <end position="140"/>
    </location>
</feature>
<organism>
    <name type="scientific">Caldanaerobacter subterraneus subsp. tengcongensis (strain DSM 15242 / JCM 11007 / NBRC 100824 / MB4)</name>
    <name type="common">Thermoanaerobacter tengcongensis</name>
    <dbReference type="NCBI Taxonomy" id="273068"/>
    <lineage>
        <taxon>Bacteria</taxon>
        <taxon>Bacillati</taxon>
        <taxon>Bacillota</taxon>
        <taxon>Clostridia</taxon>
        <taxon>Thermoanaerobacterales</taxon>
        <taxon>Thermoanaerobacteraceae</taxon>
        <taxon>Caldanaerobacter</taxon>
    </lineage>
</organism>